<protein>
    <recommendedName>
        <fullName evidence="1">Ribosome-recycling factor</fullName>
        <shortName evidence="1">RRF</shortName>
    </recommendedName>
    <alternativeName>
        <fullName evidence="1">Ribosome-releasing factor</fullName>
    </alternativeName>
</protein>
<organism>
    <name type="scientific">Francisella tularensis subsp. mediasiatica (strain FSC147)</name>
    <dbReference type="NCBI Taxonomy" id="441952"/>
    <lineage>
        <taxon>Bacteria</taxon>
        <taxon>Pseudomonadati</taxon>
        <taxon>Pseudomonadota</taxon>
        <taxon>Gammaproteobacteria</taxon>
        <taxon>Thiotrichales</taxon>
        <taxon>Francisellaceae</taxon>
        <taxon>Francisella</taxon>
    </lineage>
</organism>
<evidence type="ECO:0000255" key="1">
    <source>
        <dbReference type="HAMAP-Rule" id="MF_00040"/>
    </source>
</evidence>
<name>RRF_FRATM</name>
<accession>B2SDZ4</accession>
<sequence>MINDILKDAENRMKKSLEVLADDLAKIRTGRAHPDLLAHVTIDYYGVETPITQAANITVLDARTLGITPWEKGLSSKIEKAILTSDLGLNPTNLGDSLRVPMPALNEERRKELVKLVKSETEAGRVSIRNIRRDANGDIKELLKEKEITEDQAKKAEDDIQKITDKMIAQADALAAKKEQDLMAV</sequence>
<proteinExistence type="inferred from homology"/>
<dbReference type="EMBL" id="CP000915">
    <property type="protein sequence ID" value="ACD31358.1"/>
    <property type="molecule type" value="Genomic_DNA"/>
</dbReference>
<dbReference type="SMR" id="B2SDZ4"/>
<dbReference type="KEGG" id="ftm:FTM_1536"/>
<dbReference type="HOGENOM" id="CLU_073981_2_0_6"/>
<dbReference type="GO" id="GO:0005829">
    <property type="term" value="C:cytosol"/>
    <property type="evidence" value="ECO:0007669"/>
    <property type="project" value="GOC"/>
</dbReference>
<dbReference type="GO" id="GO:0043023">
    <property type="term" value="F:ribosomal large subunit binding"/>
    <property type="evidence" value="ECO:0007669"/>
    <property type="project" value="TreeGrafter"/>
</dbReference>
<dbReference type="GO" id="GO:0002184">
    <property type="term" value="P:cytoplasmic translational termination"/>
    <property type="evidence" value="ECO:0007669"/>
    <property type="project" value="TreeGrafter"/>
</dbReference>
<dbReference type="CDD" id="cd00520">
    <property type="entry name" value="RRF"/>
    <property type="match status" value="1"/>
</dbReference>
<dbReference type="FunFam" id="1.10.132.20:FF:000001">
    <property type="entry name" value="Ribosome-recycling factor"/>
    <property type="match status" value="1"/>
</dbReference>
<dbReference type="FunFam" id="3.30.1360.40:FF:000001">
    <property type="entry name" value="Ribosome-recycling factor"/>
    <property type="match status" value="1"/>
</dbReference>
<dbReference type="Gene3D" id="3.30.1360.40">
    <property type="match status" value="1"/>
</dbReference>
<dbReference type="Gene3D" id="1.10.132.20">
    <property type="entry name" value="Ribosome-recycling factor"/>
    <property type="match status" value="1"/>
</dbReference>
<dbReference type="HAMAP" id="MF_00040">
    <property type="entry name" value="RRF"/>
    <property type="match status" value="1"/>
</dbReference>
<dbReference type="InterPro" id="IPR002661">
    <property type="entry name" value="Ribosome_recyc_fac"/>
</dbReference>
<dbReference type="InterPro" id="IPR023584">
    <property type="entry name" value="Ribosome_recyc_fac_dom"/>
</dbReference>
<dbReference type="InterPro" id="IPR036191">
    <property type="entry name" value="RRF_sf"/>
</dbReference>
<dbReference type="NCBIfam" id="TIGR00496">
    <property type="entry name" value="frr"/>
    <property type="match status" value="1"/>
</dbReference>
<dbReference type="PANTHER" id="PTHR20982:SF3">
    <property type="entry name" value="MITOCHONDRIAL RIBOSOME RECYCLING FACTOR PSEUDO 1"/>
    <property type="match status" value="1"/>
</dbReference>
<dbReference type="PANTHER" id="PTHR20982">
    <property type="entry name" value="RIBOSOME RECYCLING FACTOR"/>
    <property type="match status" value="1"/>
</dbReference>
<dbReference type="Pfam" id="PF01765">
    <property type="entry name" value="RRF"/>
    <property type="match status" value="1"/>
</dbReference>
<dbReference type="SUPFAM" id="SSF55194">
    <property type="entry name" value="Ribosome recycling factor, RRF"/>
    <property type="match status" value="1"/>
</dbReference>
<keyword id="KW-0963">Cytoplasm</keyword>
<keyword id="KW-0648">Protein biosynthesis</keyword>
<comment type="function">
    <text evidence="1">Responsible for the release of ribosomes from messenger RNA at the termination of protein biosynthesis. May increase the efficiency of translation by recycling ribosomes from one round of translation to another.</text>
</comment>
<comment type="subcellular location">
    <subcellularLocation>
        <location evidence="1">Cytoplasm</location>
    </subcellularLocation>
</comment>
<comment type="similarity">
    <text evidence="1">Belongs to the RRF family.</text>
</comment>
<gene>
    <name evidence="1" type="primary">frr</name>
    <name type="ordered locus">FTM_1536</name>
</gene>
<feature type="chain" id="PRO_1000090744" description="Ribosome-recycling factor">
    <location>
        <begin position="1"/>
        <end position="185"/>
    </location>
</feature>
<reference key="1">
    <citation type="journal article" date="2009" name="PLoS Pathog.">
        <title>Molecular evolutionary consequences of niche restriction in Francisella tularensis, a facultative intracellular pathogen.</title>
        <authorList>
            <person name="Larsson P."/>
            <person name="Elfsmark D."/>
            <person name="Svensson K."/>
            <person name="Wikstroem P."/>
            <person name="Forsman M."/>
            <person name="Brettin T."/>
            <person name="Keim P."/>
            <person name="Johansson A."/>
        </authorList>
    </citation>
    <scope>NUCLEOTIDE SEQUENCE [LARGE SCALE GENOMIC DNA]</scope>
    <source>
        <strain>FSC147</strain>
    </source>
</reference>